<feature type="chain" id="PRO_0000224571" description="Valine--tRNA ligase">
    <location>
        <begin position="1"/>
        <end position="884"/>
    </location>
</feature>
<feature type="coiled-coil region" evidence="1">
    <location>
        <begin position="809"/>
        <end position="844"/>
    </location>
</feature>
<feature type="short sequence motif" description="'HIGH' region">
    <location>
        <begin position="46"/>
        <end position="56"/>
    </location>
</feature>
<feature type="short sequence motif" description="'KMSKS' region">
    <location>
        <begin position="520"/>
        <end position="524"/>
    </location>
</feature>
<feature type="binding site" evidence="1">
    <location>
        <position position="523"/>
    </location>
    <ligand>
        <name>ATP</name>
        <dbReference type="ChEBI" id="CHEBI:30616"/>
    </ligand>
</feature>
<evidence type="ECO:0000255" key="1">
    <source>
        <dbReference type="HAMAP-Rule" id="MF_02004"/>
    </source>
</evidence>
<reference key="1">
    <citation type="journal article" date="2002" name="Mol. Microbiol.">
        <title>Genome sequence of Streptococcus agalactiae, a pathogen causing invasive neonatal disease.</title>
        <authorList>
            <person name="Glaser P."/>
            <person name="Rusniok C."/>
            <person name="Buchrieser C."/>
            <person name="Chevalier F."/>
            <person name="Frangeul L."/>
            <person name="Msadek T."/>
            <person name="Zouine M."/>
            <person name="Couve E."/>
            <person name="Lalioui L."/>
            <person name="Poyart C."/>
            <person name="Trieu-Cuot P."/>
            <person name="Kunst F."/>
        </authorList>
    </citation>
    <scope>NUCLEOTIDE SEQUENCE [LARGE SCALE GENOMIC DNA]</scope>
    <source>
        <strain>NEM316</strain>
    </source>
</reference>
<dbReference type="EC" id="6.1.1.9" evidence="1"/>
<dbReference type="EMBL" id="AL766845">
    <property type="protein sequence ID" value="CAD46136.1"/>
    <property type="molecule type" value="Genomic_DNA"/>
</dbReference>
<dbReference type="RefSeq" id="WP_000032211.1">
    <property type="nucleotide sequence ID" value="NC_004368.1"/>
</dbReference>
<dbReference type="SMR" id="Q8E6S0"/>
<dbReference type="KEGG" id="san:gbs0492"/>
<dbReference type="eggNOG" id="COG0525">
    <property type="taxonomic scope" value="Bacteria"/>
</dbReference>
<dbReference type="HOGENOM" id="CLU_001493_0_2_9"/>
<dbReference type="Proteomes" id="UP000000823">
    <property type="component" value="Chromosome"/>
</dbReference>
<dbReference type="GO" id="GO:0005829">
    <property type="term" value="C:cytosol"/>
    <property type="evidence" value="ECO:0007669"/>
    <property type="project" value="TreeGrafter"/>
</dbReference>
<dbReference type="GO" id="GO:0002161">
    <property type="term" value="F:aminoacyl-tRNA deacylase activity"/>
    <property type="evidence" value="ECO:0007669"/>
    <property type="project" value="InterPro"/>
</dbReference>
<dbReference type="GO" id="GO:0005524">
    <property type="term" value="F:ATP binding"/>
    <property type="evidence" value="ECO:0007669"/>
    <property type="project" value="UniProtKB-UniRule"/>
</dbReference>
<dbReference type="GO" id="GO:0004832">
    <property type="term" value="F:valine-tRNA ligase activity"/>
    <property type="evidence" value="ECO:0007669"/>
    <property type="project" value="UniProtKB-UniRule"/>
</dbReference>
<dbReference type="GO" id="GO:0006438">
    <property type="term" value="P:valyl-tRNA aminoacylation"/>
    <property type="evidence" value="ECO:0007669"/>
    <property type="project" value="UniProtKB-UniRule"/>
</dbReference>
<dbReference type="CDD" id="cd07962">
    <property type="entry name" value="Anticodon_Ia_Val"/>
    <property type="match status" value="1"/>
</dbReference>
<dbReference type="CDD" id="cd00817">
    <property type="entry name" value="ValRS_core"/>
    <property type="match status" value="1"/>
</dbReference>
<dbReference type="FunFam" id="1.10.287.380:FF:000001">
    <property type="entry name" value="Valine--tRNA ligase"/>
    <property type="match status" value="1"/>
</dbReference>
<dbReference type="FunFam" id="1.10.730.10:FF:000014">
    <property type="entry name" value="Valine--tRNA ligase"/>
    <property type="match status" value="1"/>
</dbReference>
<dbReference type="FunFam" id="3.40.50.620:FF:000032">
    <property type="entry name" value="Valine--tRNA ligase"/>
    <property type="match status" value="1"/>
</dbReference>
<dbReference type="FunFam" id="3.40.50.620:FF:000098">
    <property type="entry name" value="Valine--tRNA ligase"/>
    <property type="match status" value="1"/>
</dbReference>
<dbReference type="FunFam" id="3.90.740.10:FF:000005">
    <property type="entry name" value="Valine--tRNA ligase, mitochondrial"/>
    <property type="match status" value="1"/>
</dbReference>
<dbReference type="Gene3D" id="3.40.50.620">
    <property type="entry name" value="HUPs"/>
    <property type="match status" value="3"/>
</dbReference>
<dbReference type="Gene3D" id="1.10.730.10">
    <property type="entry name" value="Isoleucyl-tRNA Synthetase, Domain 1"/>
    <property type="match status" value="1"/>
</dbReference>
<dbReference type="Gene3D" id="1.10.287.380">
    <property type="entry name" value="Valyl-tRNA synthetase, C-terminal domain"/>
    <property type="match status" value="1"/>
</dbReference>
<dbReference type="Gene3D" id="3.90.740.10">
    <property type="entry name" value="Valyl/Leucyl/Isoleucyl-tRNA synthetase, editing domain"/>
    <property type="match status" value="1"/>
</dbReference>
<dbReference type="HAMAP" id="MF_02004">
    <property type="entry name" value="Val_tRNA_synth_type1"/>
    <property type="match status" value="1"/>
</dbReference>
<dbReference type="InterPro" id="IPR001412">
    <property type="entry name" value="aa-tRNA-synth_I_CS"/>
</dbReference>
<dbReference type="InterPro" id="IPR002300">
    <property type="entry name" value="aa-tRNA-synth_Ia"/>
</dbReference>
<dbReference type="InterPro" id="IPR033705">
    <property type="entry name" value="Anticodon_Ia_Val"/>
</dbReference>
<dbReference type="InterPro" id="IPR013155">
    <property type="entry name" value="M/V/L/I-tRNA-synth_anticd-bd"/>
</dbReference>
<dbReference type="InterPro" id="IPR014729">
    <property type="entry name" value="Rossmann-like_a/b/a_fold"/>
</dbReference>
<dbReference type="InterPro" id="IPR010978">
    <property type="entry name" value="tRNA-bd_arm"/>
</dbReference>
<dbReference type="InterPro" id="IPR009080">
    <property type="entry name" value="tRNAsynth_Ia_anticodon-bd"/>
</dbReference>
<dbReference type="InterPro" id="IPR037118">
    <property type="entry name" value="Val-tRNA_synth_C_sf"/>
</dbReference>
<dbReference type="InterPro" id="IPR019499">
    <property type="entry name" value="Val-tRNA_synth_tRNA-bd"/>
</dbReference>
<dbReference type="InterPro" id="IPR009008">
    <property type="entry name" value="Val/Leu/Ile-tRNA-synth_edit"/>
</dbReference>
<dbReference type="InterPro" id="IPR002303">
    <property type="entry name" value="Valyl-tRNA_ligase"/>
</dbReference>
<dbReference type="NCBIfam" id="NF004349">
    <property type="entry name" value="PRK05729.1"/>
    <property type="match status" value="1"/>
</dbReference>
<dbReference type="NCBIfam" id="TIGR00422">
    <property type="entry name" value="valS"/>
    <property type="match status" value="1"/>
</dbReference>
<dbReference type="PANTHER" id="PTHR11946:SF93">
    <property type="entry name" value="VALINE--TRNA LIGASE, CHLOROPLASTIC_MITOCHONDRIAL 2"/>
    <property type="match status" value="1"/>
</dbReference>
<dbReference type="PANTHER" id="PTHR11946">
    <property type="entry name" value="VALYL-TRNA SYNTHETASES"/>
    <property type="match status" value="1"/>
</dbReference>
<dbReference type="Pfam" id="PF08264">
    <property type="entry name" value="Anticodon_1"/>
    <property type="match status" value="1"/>
</dbReference>
<dbReference type="Pfam" id="PF00133">
    <property type="entry name" value="tRNA-synt_1"/>
    <property type="match status" value="2"/>
</dbReference>
<dbReference type="Pfam" id="PF10458">
    <property type="entry name" value="Val_tRNA-synt_C"/>
    <property type="match status" value="1"/>
</dbReference>
<dbReference type="PRINTS" id="PR00986">
    <property type="entry name" value="TRNASYNTHVAL"/>
</dbReference>
<dbReference type="SUPFAM" id="SSF47323">
    <property type="entry name" value="Anticodon-binding domain of a subclass of class I aminoacyl-tRNA synthetases"/>
    <property type="match status" value="1"/>
</dbReference>
<dbReference type="SUPFAM" id="SSF52374">
    <property type="entry name" value="Nucleotidylyl transferase"/>
    <property type="match status" value="1"/>
</dbReference>
<dbReference type="SUPFAM" id="SSF46589">
    <property type="entry name" value="tRNA-binding arm"/>
    <property type="match status" value="1"/>
</dbReference>
<dbReference type="SUPFAM" id="SSF50677">
    <property type="entry name" value="ValRS/IleRS/LeuRS editing domain"/>
    <property type="match status" value="1"/>
</dbReference>
<dbReference type="PROSITE" id="PS00178">
    <property type="entry name" value="AA_TRNA_LIGASE_I"/>
    <property type="match status" value="1"/>
</dbReference>
<organism>
    <name type="scientific">Streptococcus agalactiae serotype III (strain NEM316)</name>
    <dbReference type="NCBI Taxonomy" id="211110"/>
    <lineage>
        <taxon>Bacteria</taxon>
        <taxon>Bacillati</taxon>
        <taxon>Bacillota</taxon>
        <taxon>Bacilli</taxon>
        <taxon>Lactobacillales</taxon>
        <taxon>Streptococcaceae</taxon>
        <taxon>Streptococcus</taxon>
    </lineage>
</organism>
<comment type="function">
    <text evidence="1">Catalyzes the attachment of valine to tRNA(Val). As ValRS can inadvertently accommodate and process structurally similar amino acids such as threonine, to avoid such errors, it has a 'posttransfer' editing activity that hydrolyzes mischarged Thr-tRNA(Val) in a tRNA-dependent manner.</text>
</comment>
<comment type="catalytic activity">
    <reaction evidence="1">
        <text>tRNA(Val) + L-valine + ATP = L-valyl-tRNA(Val) + AMP + diphosphate</text>
        <dbReference type="Rhea" id="RHEA:10704"/>
        <dbReference type="Rhea" id="RHEA-COMP:9672"/>
        <dbReference type="Rhea" id="RHEA-COMP:9708"/>
        <dbReference type="ChEBI" id="CHEBI:30616"/>
        <dbReference type="ChEBI" id="CHEBI:33019"/>
        <dbReference type="ChEBI" id="CHEBI:57762"/>
        <dbReference type="ChEBI" id="CHEBI:78442"/>
        <dbReference type="ChEBI" id="CHEBI:78537"/>
        <dbReference type="ChEBI" id="CHEBI:456215"/>
        <dbReference type="EC" id="6.1.1.9"/>
    </reaction>
</comment>
<comment type="subunit">
    <text evidence="1">Monomer.</text>
</comment>
<comment type="subcellular location">
    <subcellularLocation>
        <location evidence="1">Cytoplasm</location>
    </subcellularLocation>
</comment>
<comment type="domain">
    <text evidence="1">ValRS has two distinct active sites: one for aminoacylation and one for editing. The misactivated threonine is translocated from the active site to the editing site.</text>
</comment>
<comment type="domain">
    <text evidence="1">The C-terminal coiled-coil domain is crucial for aminoacylation activity.</text>
</comment>
<comment type="similarity">
    <text evidence="1">Belongs to the class-I aminoacyl-tRNA synthetase family. ValS type 1 subfamily.</text>
</comment>
<sequence>MSKELSPKYNPAEVEEGRYQTWLDQDVFKPSGDTEAKPYSIVIPPPNVTGKLHLGHAWDTTLQDIIIRQKRMQGFDTLWLPGMDHAGIATQAKVEERLREQGISRYDLGREKFLDKVWEWKDEYAATIKSQWGKMGLSVDYSRERFTLDEGLSKAVRKVFVDLYNKGWIYRGEFIINWDPAARTALSDIEVIHKDVEGAFYHMNYMLEDGSRALEVATTRPETMFGDVAVAVNPEDPRYKDLIGQNVILPIINKPIPIIADEHADPEFGTGVVKITPAHDPNDFAVGQRHNLPQVNVMNDDGTMNELADEFNGMDRFEARKAVVAKLESLGNLVKIEKMTHSVGHSERTGVVVEPRLSTQWFVKMDQLAKNAIANQDTEDKVEFYPPRFNDTFMSWMENVHDWVISRQLWWGHQIPAWYNVNGEMYVGEDAPEGDGWTQDEDVLDTWFSSALWPFSTMGWPDTEAADFKRYFPTSTLVTGYDIIFFWVSRMIFQSLEFTGRQPFSNVLIHGLIRDEEGRKMSKSLGNGIDPMDVIEKYGADALRWFLSNGSAPGQDVRFSYEKMDASWNFINKIWNISRYILMNNEGLTLDQARENVEKVVNSQVGNVTDRWILHNLNETVGKVTESFDKFEFGVAGHILYNFIWEEFANWYVELTKEVLYSDNEDEKVVTRSVLLYTLDQILRLLHPIMPFVTEEIFGQYAEGSIVLASYPQVNATFENQTAHKGVESLKDLIRSVRNSRAEVNVAPSKPITILVKTSDSELESFFKDNSNYIKRFTNPETLEISSAITAPELAMTSIITGAEIFLPLADLLNVEEELARLEKELAKWQKELNMVGKKLSNERFVANAKPEVVQKEKDKQTDYQTKYDATIARIEEMKKLNND</sequence>
<keyword id="KW-0030">Aminoacyl-tRNA synthetase</keyword>
<keyword id="KW-0067">ATP-binding</keyword>
<keyword id="KW-0175">Coiled coil</keyword>
<keyword id="KW-0963">Cytoplasm</keyword>
<keyword id="KW-0436">Ligase</keyword>
<keyword id="KW-0547">Nucleotide-binding</keyword>
<keyword id="KW-0648">Protein biosynthesis</keyword>
<name>SYV_STRA3</name>
<protein>
    <recommendedName>
        <fullName evidence="1">Valine--tRNA ligase</fullName>
        <ecNumber evidence="1">6.1.1.9</ecNumber>
    </recommendedName>
    <alternativeName>
        <fullName evidence="1">Valyl-tRNA synthetase</fullName>
        <shortName evidence="1">ValRS</shortName>
    </alternativeName>
</protein>
<proteinExistence type="inferred from homology"/>
<accession>Q8E6S0</accession>
<gene>
    <name evidence="1" type="primary">valS</name>
    <name type="ordered locus">gbs0492</name>
</gene>